<evidence type="ECO:0000250" key="1"/>
<evidence type="ECO:0000255" key="2">
    <source>
        <dbReference type="HAMAP-Rule" id="MF_01356"/>
    </source>
</evidence>
<gene>
    <name evidence="2" type="primary">nuoB</name>
    <name type="ordered locus">RD1_3291</name>
</gene>
<dbReference type="EC" id="7.1.1.-" evidence="2"/>
<dbReference type="EMBL" id="CP000362">
    <property type="protein sequence ID" value="ABG32792.1"/>
    <property type="molecule type" value="Genomic_DNA"/>
</dbReference>
<dbReference type="RefSeq" id="WP_011569408.1">
    <property type="nucleotide sequence ID" value="NC_008209.1"/>
</dbReference>
<dbReference type="SMR" id="Q163Q1"/>
<dbReference type="STRING" id="375451.RD1_3291"/>
<dbReference type="KEGG" id="rde:RD1_3291"/>
<dbReference type="eggNOG" id="COG0377">
    <property type="taxonomic scope" value="Bacteria"/>
</dbReference>
<dbReference type="HOGENOM" id="CLU_055737_7_0_5"/>
<dbReference type="OrthoDB" id="9786737at2"/>
<dbReference type="Proteomes" id="UP000007029">
    <property type="component" value="Chromosome"/>
</dbReference>
<dbReference type="GO" id="GO:0005886">
    <property type="term" value="C:plasma membrane"/>
    <property type="evidence" value="ECO:0007669"/>
    <property type="project" value="UniProtKB-SubCell"/>
</dbReference>
<dbReference type="GO" id="GO:0045271">
    <property type="term" value="C:respiratory chain complex I"/>
    <property type="evidence" value="ECO:0007669"/>
    <property type="project" value="TreeGrafter"/>
</dbReference>
<dbReference type="GO" id="GO:0051539">
    <property type="term" value="F:4 iron, 4 sulfur cluster binding"/>
    <property type="evidence" value="ECO:0007669"/>
    <property type="project" value="UniProtKB-KW"/>
</dbReference>
<dbReference type="GO" id="GO:0005506">
    <property type="term" value="F:iron ion binding"/>
    <property type="evidence" value="ECO:0007669"/>
    <property type="project" value="UniProtKB-UniRule"/>
</dbReference>
<dbReference type="GO" id="GO:0008137">
    <property type="term" value="F:NADH dehydrogenase (ubiquinone) activity"/>
    <property type="evidence" value="ECO:0007669"/>
    <property type="project" value="InterPro"/>
</dbReference>
<dbReference type="GO" id="GO:0050136">
    <property type="term" value="F:NADH:ubiquinone reductase (non-electrogenic) activity"/>
    <property type="evidence" value="ECO:0007669"/>
    <property type="project" value="UniProtKB-UniRule"/>
</dbReference>
<dbReference type="GO" id="GO:0048038">
    <property type="term" value="F:quinone binding"/>
    <property type="evidence" value="ECO:0007669"/>
    <property type="project" value="UniProtKB-KW"/>
</dbReference>
<dbReference type="GO" id="GO:0009060">
    <property type="term" value="P:aerobic respiration"/>
    <property type="evidence" value="ECO:0007669"/>
    <property type="project" value="TreeGrafter"/>
</dbReference>
<dbReference type="GO" id="GO:0015990">
    <property type="term" value="P:electron transport coupled proton transport"/>
    <property type="evidence" value="ECO:0007669"/>
    <property type="project" value="TreeGrafter"/>
</dbReference>
<dbReference type="FunFam" id="3.40.50.12280:FF:000001">
    <property type="entry name" value="NADH-quinone oxidoreductase subunit B 2"/>
    <property type="match status" value="1"/>
</dbReference>
<dbReference type="Gene3D" id="3.40.50.12280">
    <property type="match status" value="1"/>
</dbReference>
<dbReference type="HAMAP" id="MF_01356">
    <property type="entry name" value="NDH1_NuoB"/>
    <property type="match status" value="1"/>
</dbReference>
<dbReference type="InterPro" id="IPR006137">
    <property type="entry name" value="NADH_UbQ_OxRdtase-like_20kDa"/>
</dbReference>
<dbReference type="InterPro" id="IPR006138">
    <property type="entry name" value="NADH_UQ_OxRdtase_20Kd_su"/>
</dbReference>
<dbReference type="NCBIfam" id="TIGR01957">
    <property type="entry name" value="nuoB_fam"/>
    <property type="match status" value="1"/>
</dbReference>
<dbReference type="NCBIfam" id="NF005012">
    <property type="entry name" value="PRK06411.1"/>
    <property type="match status" value="1"/>
</dbReference>
<dbReference type="PANTHER" id="PTHR11995">
    <property type="entry name" value="NADH DEHYDROGENASE"/>
    <property type="match status" value="1"/>
</dbReference>
<dbReference type="PANTHER" id="PTHR11995:SF14">
    <property type="entry name" value="NADH DEHYDROGENASE [UBIQUINONE] IRON-SULFUR PROTEIN 7, MITOCHONDRIAL"/>
    <property type="match status" value="1"/>
</dbReference>
<dbReference type="Pfam" id="PF01058">
    <property type="entry name" value="Oxidored_q6"/>
    <property type="match status" value="1"/>
</dbReference>
<dbReference type="SUPFAM" id="SSF56770">
    <property type="entry name" value="HydA/Nqo6-like"/>
    <property type="match status" value="1"/>
</dbReference>
<dbReference type="PROSITE" id="PS01150">
    <property type="entry name" value="COMPLEX1_20K"/>
    <property type="match status" value="1"/>
</dbReference>
<organism>
    <name type="scientific">Roseobacter denitrificans (strain ATCC 33942 / OCh 114)</name>
    <name type="common">Erythrobacter sp. (strain OCh 114)</name>
    <name type="synonym">Roseobacter denitrificans</name>
    <dbReference type="NCBI Taxonomy" id="375451"/>
    <lineage>
        <taxon>Bacteria</taxon>
        <taxon>Pseudomonadati</taxon>
        <taxon>Pseudomonadota</taxon>
        <taxon>Alphaproteobacteria</taxon>
        <taxon>Rhodobacterales</taxon>
        <taxon>Roseobacteraceae</taxon>
        <taxon>Roseobacter</taxon>
    </lineage>
</organism>
<comment type="function">
    <text evidence="1">NDH-1 shuttles electrons from NADH, via FMN and iron-sulfur (Fe-S) centers, to quinones in the respiratory chain. Couples the redox reaction to proton translocation (for every two electrons transferred, four hydrogen ions are translocated across the cytoplasmic membrane), and thus conserves the redox energy in a proton gradient (By similarity).</text>
</comment>
<comment type="catalytic activity">
    <reaction evidence="2">
        <text>a quinone + NADH + 5 H(+)(in) = a quinol + NAD(+) + 4 H(+)(out)</text>
        <dbReference type="Rhea" id="RHEA:57888"/>
        <dbReference type="ChEBI" id="CHEBI:15378"/>
        <dbReference type="ChEBI" id="CHEBI:24646"/>
        <dbReference type="ChEBI" id="CHEBI:57540"/>
        <dbReference type="ChEBI" id="CHEBI:57945"/>
        <dbReference type="ChEBI" id="CHEBI:132124"/>
    </reaction>
</comment>
<comment type="cofactor">
    <cofactor evidence="2">
        <name>[4Fe-4S] cluster</name>
        <dbReference type="ChEBI" id="CHEBI:49883"/>
    </cofactor>
    <text evidence="2">Binds 1 [4Fe-4S] cluster.</text>
</comment>
<comment type="subunit">
    <text evidence="2">NDH-1 is composed of 14 different subunits. Subunits NuoB, C, D, E, F, and G constitute the peripheral sector of the complex.</text>
</comment>
<comment type="subcellular location">
    <subcellularLocation>
        <location evidence="2">Cell inner membrane</location>
        <topology evidence="2">Peripheral membrane protein</topology>
        <orientation evidence="2">Cytoplasmic side</orientation>
    </subcellularLocation>
</comment>
<comment type="similarity">
    <text evidence="2">Belongs to the complex I 20 kDa subunit family.</text>
</comment>
<protein>
    <recommendedName>
        <fullName evidence="2">NADH-quinone oxidoreductase subunit B</fullName>
        <ecNumber evidence="2">7.1.1.-</ecNumber>
    </recommendedName>
    <alternativeName>
        <fullName evidence="2">NADH dehydrogenase I subunit B</fullName>
    </alternativeName>
    <alternativeName>
        <fullName evidence="2">NDH-1 subunit B</fullName>
    </alternativeName>
</protein>
<feature type="chain" id="PRO_0000358477" description="NADH-quinone oxidoreductase subunit B">
    <location>
        <begin position="1"/>
        <end position="177"/>
    </location>
</feature>
<feature type="binding site" evidence="2">
    <location>
        <position position="56"/>
    </location>
    <ligand>
        <name>[4Fe-4S] cluster</name>
        <dbReference type="ChEBI" id="CHEBI:49883"/>
    </ligand>
</feature>
<feature type="binding site" evidence="2">
    <location>
        <position position="57"/>
    </location>
    <ligand>
        <name>[4Fe-4S] cluster</name>
        <dbReference type="ChEBI" id="CHEBI:49883"/>
    </ligand>
</feature>
<feature type="binding site" evidence="2">
    <location>
        <position position="121"/>
    </location>
    <ligand>
        <name>[4Fe-4S] cluster</name>
        <dbReference type="ChEBI" id="CHEBI:49883"/>
    </ligand>
</feature>
<feature type="binding site" evidence="2">
    <location>
        <position position="151"/>
    </location>
    <ligand>
        <name>[4Fe-4S] cluster</name>
        <dbReference type="ChEBI" id="CHEBI:49883"/>
    </ligand>
</feature>
<name>NUOB_ROSDO</name>
<proteinExistence type="inferred from homology"/>
<sequence length="177" mass="19703">MTVATNVNAAGVDREVATQELNRELQDKGFLLTSTEDIINWARTGSLHWMTFGLACCAVEMMHTAMPRYDMERFGTAPRASPRQSDLMIVAGTLTNKMAPALRKVYDQMPEPRYVISMGSCANGGGYYHYSYSVVRGCDRIVPVDVYVPGCPPTAEALLYGIMQLQRKIRRTGTIVR</sequence>
<keyword id="KW-0004">4Fe-4S</keyword>
<keyword id="KW-0997">Cell inner membrane</keyword>
<keyword id="KW-1003">Cell membrane</keyword>
<keyword id="KW-0408">Iron</keyword>
<keyword id="KW-0411">Iron-sulfur</keyword>
<keyword id="KW-0472">Membrane</keyword>
<keyword id="KW-0479">Metal-binding</keyword>
<keyword id="KW-0520">NAD</keyword>
<keyword id="KW-0874">Quinone</keyword>
<keyword id="KW-1185">Reference proteome</keyword>
<keyword id="KW-1278">Translocase</keyword>
<keyword id="KW-0813">Transport</keyword>
<keyword id="KW-0830">Ubiquinone</keyword>
<accession>Q163Q1</accession>
<reference key="1">
    <citation type="journal article" date="2007" name="J. Bacteriol.">
        <title>The complete genome sequence of Roseobacter denitrificans reveals a mixotrophic rather than photosynthetic metabolism.</title>
        <authorList>
            <person name="Swingley W.D."/>
            <person name="Sadekar S."/>
            <person name="Mastrian S.D."/>
            <person name="Matthies H.J."/>
            <person name="Hao J."/>
            <person name="Ramos H."/>
            <person name="Acharya C.R."/>
            <person name="Conrad A.L."/>
            <person name="Taylor H.L."/>
            <person name="Dejesa L.C."/>
            <person name="Shah M.K."/>
            <person name="O'Huallachain M.E."/>
            <person name="Lince M.T."/>
            <person name="Blankenship R.E."/>
            <person name="Beatty J.T."/>
            <person name="Touchman J.W."/>
        </authorList>
    </citation>
    <scope>NUCLEOTIDE SEQUENCE [LARGE SCALE GENOMIC DNA]</scope>
    <source>
        <strain>ATCC 33942 / OCh 114</strain>
    </source>
</reference>